<proteinExistence type="evidence at protein level"/>
<reference key="1">
    <citation type="journal article" date="1992" name="J. Gen. Microbiol.">
        <title>Nucleotide sequence of the structural gene encoding a 2-haloalkanoic acid dehalogenase of Pseudomonas putida strain AJ1 and purification of the encoded protein.</title>
        <authorList>
            <person name="Jones D.H."/>
            <person name="Barth P.T."/>
            <person name="Byrom D."/>
            <person name="Thomas C.M."/>
        </authorList>
    </citation>
    <scope>NUCLEOTIDE SEQUENCE [GENOMIC DNA]</scope>
    <scope>FUNCTION</scope>
    <scope>CATALYTIC ACTIVITY</scope>
    <scope>BIOPHYSICOCHEMICAL PROPERTIES</scope>
    <scope>SUBUNIT</scope>
    <source>
        <strain>AJ1</strain>
    </source>
</reference>
<reference key="2">
    <citation type="journal article" date="1992" name="J. Bacteriol.">
        <title>Cloning and partial sequencing of an operon encoding two Pseudomonas putida haloalkanoate dehalogenases of opposite stereospecificity.</title>
        <authorList>
            <person name="Barth P.T."/>
            <person name="Bolton L."/>
            <person name="Thomson J.C."/>
        </authorList>
    </citation>
    <scope>NUCLEOTIDE SEQUENCE [GENOMIC DNA]</scope>
    <source>
        <strain>AJ1</strain>
    </source>
</reference>
<organism>
    <name type="scientific">Pseudomonas putida</name>
    <name type="common">Arthrobacter siderocapsulatus</name>
    <dbReference type="NCBI Taxonomy" id="303"/>
    <lineage>
        <taxon>Bacteria</taxon>
        <taxon>Pseudomonadati</taxon>
        <taxon>Pseudomonadota</taxon>
        <taxon>Gammaproteobacteria</taxon>
        <taxon>Pseudomonadales</taxon>
        <taxon>Pseudomonadaceae</taxon>
        <taxon>Pseudomonas</taxon>
    </lineage>
</organism>
<accession>Q52087</accession>
<gene>
    <name evidence="3" type="primary">hadL</name>
</gene>
<sequence>MKNIQGIVFDLYGTLYDVHSVVQACEEVYPGQGDAISRLWRQKQLEYTWLRSLMGRYVNFEKATEDALRFTCTHLGLSLDDETHQRLSDAYLHLTPYADTADAVRRLKAAGLPLGIISNGSHCSIEQVVTNSEMNWAFDQLISVEDVQVFKPDSRVYSLAEKRMGFPKENILFVSSNAWDASAASNFGFPVCWINRQNGAFDELDAKPTHVVRNLAEMSNWLVNSLD</sequence>
<comment type="function">
    <text evidence="2">Catalyzes the hydrolytic dehalogenation of small (S)-2-haloalkanoic acids to yield the corresponding (R)-2-hydroxyalkanoic acids (PubMed:1588303). Acts on acids of short chain lengths, C(2) to C(4), with inversion of configuration at C-2 (PubMed:1588303). Active with 2-halogenated carboxylic acids and converts only the S-isomer (or L-isomer) of 2-chloropropionic acid with inversion of configuration to produce R-lactate (or D-isomer) (PubMed:1588303).</text>
</comment>
<comment type="catalytic activity">
    <reaction evidence="2">
        <text>an (S)-2-haloacid + H2O = a (2R)-2-hydroxycarboxylate + a halide anion + H(+)</text>
        <dbReference type="Rhea" id="RHEA:11192"/>
        <dbReference type="ChEBI" id="CHEBI:15377"/>
        <dbReference type="ChEBI" id="CHEBI:15378"/>
        <dbReference type="ChEBI" id="CHEBI:16042"/>
        <dbReference type="ChEBI" id="CHEBI:58314"/>
        <dbReference type="ChEBI" id="CHEBI:137405"/>
        <dbReference type="EC" id="3.8.1.2"/>
    </reaction>
</comment>
<comment type="catalytic activity">
    <reaction evidence="2">
        <text>(S)-2-chloropropanoate + H2O = (R)-lactate + chloride + H(+)</text>
        <dbReference type="Rhea" id="RHEA:67956"/>
        <dbReference type="ChEBI" id="CHEBI:15377"/>
        <dbReference type="ChEBI" id="CHEBI:15378"/>
        <dbReference type="ChEBI" id="CHEBI:16004"/>
        <dbReference type="ChEBI" id="CHEBI:17996"/>
        <dbReference type="ChEBI" id="CHEBI:73934"/>
    </reaction>
</comment>
<comment type="biophysicochemical properties">
    <phDependence>
        <text evidence="2">Optimum pH is between 10 and 11.</text>
    </phDependence>
</comment>
<comment type="subunit">
    <text evidence="2">Homotetramer.</text>
</comment>
<comment type="biotechnology">
    <text evidence="4">(S)-2-haloacid dehalogenases may be used for the biodegradation of halogenated substances and their derivatives which are widely used as pesticides, herbicides and other industrial products.</text>
</comment>
<comment type="similarity">
    <text evidence="4">Belongs to the HAD-like hydrolase superfamily. S-2-haloalkanoic acid dehalogenase family.</text>
</comment>
<feature type="chain" id="PRO_0000079163" description="(S)-2-haloacid dehalogenase">
    <location>
        <begin position="1"/>
        <end position="227"/>
    </location>
</feature>
<feature type="region of interest" description="Important for catalytic activity" evidence="1">
    <location>
        <begin position="175"/>
        <end position="180"/>
    </location>
</feature>
<feature type="active site" description="Nucleophile" evidence="1">
    <location>
        <position position="10"/>
    </location>
</feature>
<feature type="binding site" evidence="1">
    <location>
        <begin position="11"/>
        <end position="12"/>
    </location>
    <ligand>
        <name>an (S)-2-haloacid</name>
        <dbReference type="ChEBI" id="CHEBI:137405"/>
    </ligand>
</feature>
<feature type="binding site" evidence="1">
    <location>
        <position position="41"/>
    </location>
    <ligand>
        <name>an (S)-2-haloacid</name>
        <dbReference type="ChEBI" id="CHEBI:137405"/>
    </ligand>
</feature>
<feature type="binding site" evidence="1">
    <location>
        <begin position="118"/>
        <end position="119"/>
    </location>
    <ligand>
        <name>an (S)-2-haloacid</name>
        <dbReference type="ChEBI" id="CHEBI:137405"/>
    </ligand>
</feature>
<feature type="site" description="Important for catalytic activity" evidence="1">
    <location>
        <position position="14"/>
    </location>
</feature>
<feature type="site" description="Important for catalytic activity" evidence="1">
    <location>
        <position position="151"/>
    </location>
</feature>
<feature type="site" description="Important for catalytic activity" evidence="1">
    <location>
        <position position="157"/>
    </location>
</feature>
<dbReference type="EC" id="3.8.1.2" evidence="2"/>
<dbReference type="EMBL" id="M81841">
    <property type="protein sequence ID" value="AAA25832.1"/>
    <property type="molecule type" value="Genomic_DNA"/>
</dbReference>
<dbReference type="PIR" id="A44830">
    <property type="entry name" value="A44830"/>
</dbReference>
<dbReference type="SMR" id="Q52087"/>
<dbReference type="BRENDA" id="3.8.1.2">
    <property type="organism ID" value="5092"/>
</dbReference>
<dbReference type="GO" id="GO:0018784">
    <property type="term" value="F:(S)-2-haloacid dehalogenase activity"/>
    <property type="evidence" value="ECO:0007669"/>
    <property type="project" value="UniProtKB-EC"/>
</dbReference>
<dbReference type="CDD" id="cd02588">
    <property type="entry name" value="HAD_L2-DEX"/>
    <property type="match status" value="1"/>
</dbReference>
<dbReference type="Gene3D" id="3.40.50.1000">
    <property type="entry name" value="HAD superfamily/HAD-like"/>
    <property type="match status" value="1"/>
</dbReference>
<dbReference type="Gene3D" id="1.10.150.240">
    <property type="entry name" value="Putative phosphatase, domain 2"/>
    <property type="match status" value="1"/>
</dbReference>
<dbReference type="InterPro" id="IPR006328">
    <property type="entry name" value="2-HAD"/>
</dbReference>
<dbReference type="InterPro" id="IPR036412">
    <property type="entry name" value="HAD-like_sf"/>
</dbReference>
<dbReference type="InterPro" id="IPR006439">
    <property type="entry name" value="HAD-SF_hydro_IA"/>
</dbReference>
<dbReference type="InterPro" id="IPR023214">
    <property type="entry name" value="HAD_sf"/>
</dbReference>
<dbReference type="InterPro" id="IPR023198">
    <property type="entry name" value="PGP-like_dom2"/>
</dbReference>
<dbReference type="InterPro" id="IPR051540">
    <property type="entry name" value="S-2-haloacid_dehalogenase"/>
</dbReference>
<dbReference type="NCBIfam" id="TIGR01493">
    <property type="entry name" value="HAD-SF-IA-v2"/>
    <property type="match status" value="1"/>
</dbReference>
<dbReference type="NCBIfam" id="TIGR01428">
    <property type="entry name" value="HAD_type_II"/>
    <property type="match status" value="1"/>
</dbReference>
<dbReference type="PANTHER" id="PTHR43316:SF3">
    <property type="entry name" value="HALOACID DEHALOGENASE, TYPE II (AFU_ORTHOLOGUE AFUA_2G07750)-RELATED"/>
    <property type="match status" value="1"/>
</dbReference>
<dbReference type="PANTHER" id="PTHR43316">
    <property type="entry name" value="HYDROLASE, HALOACID DELAHOGENASE-RELATED"/>
    <property type="match status" value="1"/>
</dbReference>
<dbReference type="Pfam" id="PF00702">
    <property type="entry name" value="Hydrolase"/>
    <property type="match status" value="1"/>
</dbReference>
<dbReference type="PRINTS" id="PR00413">
    <property type="entry name" value="HADHALOGNASE"/>
</dbReference>
<dbReference type="SFLD" id="SFLDF00045">
    <property type="entry name" value="2-haloacid_dehalogenase"/>
    <property type="match status" value="1"/>
</dbReference>
<dbReference type="SFLD" id="SFLDS00003">
    <property type="entry name" value="Haloacid_Dehalogenase"/>
    <property type="match status" value="1"/>
</dbReference>
<dbReference type="SUPFAM" id="SSF56784">
    <property type="entry name" value="HAD-like"/>
    <property type="match status" value="1"/>
</dbReference>
<protein>
    <recommendedName>
        <fullName evidence="4">(S)-2-haloacid dehalogenase</fullName>
        <ecNumber evidence="2">3.8.1.2</ecNumber>
    </recommendedName>
    <alternativeName>
        <fullName>2-haloalkanoic acid dehalogenase</fullName>
    </alternativeName>
    <alternativeName>
        <fullName evidence="3">Halocarboxylic acid halidohydrolase</fullName>
    </alternativeName>
    <alternativeName>
        <fullName>L-2-haloacid dehalogenase</fullName>
    </alternativeName>
</protein>
<name>HADL_PSEPU</name>
<evidence type="ECO:0000250" key="1">
    <source>
        <dbReference type="UniProtKB" id="Q53464"/>
    </source>
</evidence>
<evidence type="ECO:0000269" key="2">
    <source>
    </source>
</evidence>
<evidence type="ECO:0000303" key="3">
    <source>
    </source>
</evidence>
<evidence type="ECO:0000305" key="4"/>
<keyword id="KW-0378">Hydrolase</keyword>